<accession>O45307</accession>
<gene>
    <name type="primary">ddo-1</name>
    <name type="ORF">C47A10.5</name>
</gene>
<protein>
    <recommendedName>
        <fullName>D-aspartate oxidase 1</fullName>
        <shortName>DASOX 1</shortName>
        <shortName evidence="9">DASPO 1</shortName>
        <shortName>DDO-1</shortName>
        <ecNumber evidence="4 5 6 8">1.4.3.1</ecNumber>
    </recommendedName>
</protein>
<proteinExistence type="evidence at protein level"/>
<comment type="function">
    <text evidence="4 5 6 7 8">Selectively catalyzes the oxidative deamination of acidic amino acids (PubMed:17140416, PubMed:20564561, PubMed:20603179, PubMed:32376478). May play a role in the egg-laying events and early development of the worm, in addition to quality control of the germ cells (PubMed:22393259).</text>
</comment>
<comment type="catalytic activity">
    <reaction evidence="4 5 8">
        <text>D-aspartate + O2 + H2O = oxaloacetate + H2O2 + NH4(+)</text>
        <dbReference type="Rhea" id="RHEA:12512"/>
        <dbReference type="ChEBI" id="CHEBI:15377"/>
        <dbReference type="ChEBI" id="CHEBI:15379"/>
        <dbReference type="ChEBI" id="CHEBI:16240"/>
        <dbReference type="ChEBI" id="CHEBI:16452"/>
        <dbReference type="ChEBI" id="CHEBI:28938"/>
        <dbReference type="ChEBI" id="CHEBI:29990"/>
        <dbReference type="EC" id="1.4.3.1"/>
    </reaction>
    <physiologicalReaction direction="left-to-right" evidence="4 5 8">
        <dbReference type="Rhea" id="RHEA:12513"/>
    </physiologicalReaction>
</comment>
<comment type="catalytic activity">
    <reaction evidence="4 5 6 8">
        <text>D-glutamate + O2 + H2O = H2O2 + 2-oxoglutarate + NH4(+)</text>
        <dbReference type="Rhea" id="RHEA:10028"/>
        <dbReference type="ChEBI" id="CHEBI:15377"/>
        <dbReference type="ChEBI" id="CHEBI:15379"/>
        <dbReference type="ChEBI" id="CHEBI:16240"/>
        <dbReference type="ChEBI" id="CHEBI:16810"/>
        <dbReference type="ChEBI" id="CHEBI:28938"/>
        <dbReference type="ChEBI" id="CHEBI:29986"/>
    </reaction>
    <physiologicalReaction direction="left-to-right" evidence="4 5 6 8">
        <dbReference type="Rhea" id="RHEA:10029"/>
    </physiologicalReaction>
</comment>
<comment type="cofactor">
    <cofactor evidence="8">
        <name>FAD</name>
        <dbReference type="ChEBI" id="CHEBI:57692"/>
    </cofactor>
</comment>
<comment type="activity regulation">
    <text evidence="8">Not inhibited by potassium bromide or thiolactomycin.</text>
</comment>
<comment type="biophysicochemical properties">
    <kinetics>
        <KM evidence="4 5">2.02 mM for D-aspartate</KM>
        <KM evidence="4 5">0.23 mM for D-glutamate</KM>
        <KM evidence="4 5">0.84 mM for N-methyl D-aspartate</KM>
        <KM evidence="4 5">5.54 mM for D-aspartate</KM>
        <KM evidence="4 5">1.06 mM for D-glutamate</KM>
        <KM evidence="4 5">14.6 mM for N-methyl D-aspartate</KM>
        <Vmax evidence="4 5">6.16 umol/min/mg enzyme with D-aspartate as substrate</Vmax>
        <Vmax evidence="4 5">7.62 umol/min/mg enzyme with D-glutamate as substrate</Vmax>
        <Vmax evidence="4 5">8.8 umol/min/mg enzyme with N-methyl D-aspartate as substrate</Vmax>
    </kinetics>
</comment>
<comment type="subcellular location">
    <subcellularLocation>
        <location evidence="1">Peroxisome matrix</location>
    </subcellularLocation>
</comment>
<comment type="tissue specificity">
    <text evidence="7">Expressed in the intestinal cells, hypodermis and in unidentified cells in the head in adult hermaphrodites.</text>
</comment>
<comment type="developmental stage">
    <text evidence="7">Expression detected in the intestinal cells from 3-fold stage embryo to adult stages, and also in the hypodermis and in unidentified cells in the head from larval to adult stages.</text>
</comment>
<comment type="disruption phenotype">
    <text evidence="7">Mutant worms have decreased egg-laying capacity at 20 degrees Celsius and decreased hatching rate and smaller brood size at 25 degrees Celsius. Mutant worms have high D-Asp and D-Glu content at both egg and young adult stage but do not show any change in physical appearance. Mutant worms also exhibit decreased fertilization rates.</text>
</comment>
<comment type="similarity">
    <text evidence="3">Belongs to the DAMOX/DASOX family.</text>
</comment>
<reference evidence="9 10" key="1">
    <citation type="journal article" date="2007" name="FEBS J.">
        <title>Caenorhabditis elegans has two genes encoding functional D-aspartate oxidases.</title>
        <authorList>
            <person name="Katane M."/>
            <person name="Seida Y."/>
            <person name="Sekine M."/>
            <person name="Furuchi T."/>
            <person name="Homma H."/>
        </authorList>
    </citation>
    <scope>NUCLEOTIDE SEQUENCE [MRNA]</scope>
    <scope>FUNCTION</scope>
    <scope>BIOPHYSICOCHEMICAL PROPERTIES</scope>
    <source>
        <strain evidence="10">Bristol N2</strain>
    </source>
</reference>
<reference evidence="11" key="2">
    <citation type="journal article" date="1998" name="Science">
        <title>Genome sequence of the nematode C. elegans: a platform for investigating biology.</title>
        <authorList>
            <consortium name="The C. elegans sequencing consortium"/>
        </authorList>
    </citation>
    <scope>NUCLEOTIDE SEQUENCE [LARGE SCALE GENOMIC DNA]</scope>
    <source>
        <strain>Bristol N2</strain>
    </source>
</reference>
<reference key="3">
    <citation type="journal article" date="2010" name="Biochimie">
        <title>Thiolactomycin inhibits D-aspartate oxidase: a novel approach to probing the active site environment.</title>
        <authorList>
            <person name="Katane M."/>
            <person name="Saitoh Y."/>
            <person name="Hanai T."/>
            <person name="Sekine M."/>
            <person name="Furuchi T."/>
            <person name="Koyama N."/>
            <person name="Nakagome I."/>
            <person name="Tomoda H."/>
            <person name="Hirono S."/>
            <person name="Homma H."/>
        </authorList>
    </citation>
    <scope>FUNCTION</scope>
    <scope>CATALYTIC ACTIVITY</scope>
    <scope>ACTIVITY REGULATION</scope>
</reference>
<reference key="4">
    <citation type="journal article" date="2010" name="Chem. Biodivers.">
        <title>Comparative characterization of three D-aspartate oxidases and one D-amino acid oxidase from Caenorhabditis elegans.</title>
        <authorList>
            <person name="Katane M."/>
            <person name="Saitoh Y."/>
            <person name="Seida Y."/>
            <person name="Sekine M."/>
            <person name="Furuchi T."/>
            <person name="Homma H."/>
        </authorList>
    </citation>
    <scope>FUNCTION</scope>
    <scope>CATALYTIC ACTIVITY</scope>
    <scope>SUBSTRATE SPECIFICITY</scope>
    <scope>STEREOSPECIFICITY</scope>
    <scope>BIOPHYSICOCHEMICAL PROPERTIES</scope>
</reference>
<reference key="5">
    <citation type="journal article" date="2012" name="Mol. Cell. Biol.">
        <title>Spatiotemporal localization of D-amino acid oxidase and D-aspartate oxidases during development in Caenorhabditis elegans.</title>
        <authorList>
            <person name="Saitoh Y."/>
            <person name="Katane M."/>
            <person name="Kawata T."/>
            <person name="Maeda K."/>
            <person name="Sekine M."/>
            <person name="Furuchi T."/>
            <person name="Kobuna H."/>
            <person name="Sakamoto T."/>
            <person name="Inoue T."/>
            <person name="Arai H."/>
            <person name="Nakagawa Y."/>
            <person name="Homma H."/>
        </authorList>
    </citation>
    <scope>FUNCTION</scope>
    <scope>TISSUE SPECIFICITY</scope>
    <scope>DEVELOPMENTAL STAGE</scope>
    <scope>DISRUPTION PHENOTYPE</scope>
    <source>
        <strain>Bristol N2</strain>
    </source>
</reference>
<reference key="6">
    <citation type="journal article" date="2020" name="Biochim. Biophys. Acta">
        <title>Biochemical characterization of d-aspartate oxidase from Caenorhabditis elegans: its potential use in the determination of free d-glutamate in biological samples.</title>
        <authorList>
            <person name="Katane M."/>
            <person name="Kuwabara H."/>
            <person name="Nakayama K."/>
            <person name="Saitoh Y."/>
            <person name="Miyamoto T."/>
            <person name="Sekine M."/>
            <person name="Homma H."/>
        </authorList>
    </citation>
    <scope>FUNCTION</scope>
    <scope>CATALYTIC ACTIVITY</scope>
    <scope>COFACTOR</scope>
    <scope>ACTIVITY REGULATION</scope>
</reference>
<organism>
    <name type="scientific">Caenorhabditis elegans</name>
    <dbReference type="NCBI Taxonomy" id="6239"/>
    <lineage>
        <taxon>Eukaryota</taxon>
        <taxon>Metazoa</taxon>
        <taxon>Ecdysozoa</taxon>
        <taxon>Nematoda</taxon>
        <taxon>Chromadorea</taxon>
        <taxon>Rhabditida</taxon>
        <taxon>Rhabditina</taxon>
        <taxon>Rhabditomorpha</taxon>
        <taxon>Rhabditoidea</taxon>
        <taxon>Rhabditidae</taxon>
        <taxon>Peloderinae</taxon>
        <taxon>Caenorhabditis</taxon>
    </lineage>
</organism>
<feature type="chain" id="PRO_0000317123" description="D-aspartate oxidase 1">
    <location>
        <begin position="1"/>
        <end position="334"/>
    </location>
</feature>
<feature type="short sequence motif" description="Microbody targeting signal" evidence="3">
    <location>
        <begin position="332"/>
        <end position="334"/>
    </location>
</feature>
<feature type="binding site" evidence="2">
    <location>
        <position position="35"/>
    </location>
    <ligand>
        <name>FAD</name>
        <dbReference type="ChEBI" id="CHEBI:57692"/>
    </ligand>
</feature>
<feature type="binding site" evidence="2">
    <location>
        <position position="36"/>
    </location>
    <ligand>
        <name>FAD</name>
        <dbReference type="ChEBI" id="CHEBI:57692"/>
    </ligand>
</feature>
<feature type="binding site" evidence="2">
    <location>
        <position position="43"/>
    </location>
    <ligand>
        <name>FAD</name>
        <dbReference type="ChEBI" id="CHEBI:57692"/>
    </ligand>
</feature>
<feature type="binding site" evidence="2">
    <location>
        <position position="307"/>
    </location>
    <ligand>
        <name>FAD</name>
        <dbReference type="ChEBI" id="CHEBI:57692"/>
    </ligand>
</feature>
<feature type="binding site" evidence="2">
    <location>
        <position position="312"/>
    </location>
    <ligand>
        <name>FAD</name>
        <dbReference type="ChEBI" id="CHEBI:57692"/>
    </ligand>
</feature>
<dbReference type="EC" id="1.4.3.1" evidence="4 5 6 8"/>
<dbReference type="EMBL" id="AB275891">
    <property type="protein sequence ID" value="BAF34314.1"/>
    <property type="molecule type" value="mRNA"/>
</dbReference>
<dbReference type="EMBL" id="Z81484">
    <property type="protein sequence ID" value="CAB03970.2"/>
    <property type="molecule type" value="Genomic_DNA"/>
</dbReference>
<dbReference type="PIR" id="T19979">
    <property type="entry name" value="T19979"/>
</dbReference>
<dbReference type="RefSeq" id="NP_001256757.1">
    <property type="nucleotide sequence ID" value="NM_001269828.3"/>
</dbReference>
<dbReference type="SMR" id="O45307"/>
<dbReference type="FunCoup" id="O45307">
    <property type="interactions" value="105"/>
</dbReference>
<dbReference type="STRING" id="6239.C47A10.5a.1"/>
<dbReference type="BindingDB" id="O45307"/>
<dbReference type="ChEMBL" id="CHEMBL3351210"/>
<dbReference type="PaxDb" id="6239-C47A10.5a"/>
<dbReference type="PeptideAtlas" id="O45307"/>
<dbReference type="EnsemblMetazoa" id="C47A10.5a.1">
    <property type="protein sequence ID" value="C47A10.5a.1"/>
    <property type="gene ID" value="WBGene00008127"/>
</dbReference>
<dbReference type="GeneID" id="183530"/>
<dbReference type="KEGG" id="cel:CELE_C47A10.5"/>
<dbReference type="UCSC" id="C47A10.5">
    <property type="organism name" value="c. elegans"/>
</dbReference>
<dbReference type="AGR" id="WB:WBGene00008127"/>
<dbReference type="CTD" id="183530"/>
<dbReference type="WormBase" id="C47A10.5a">
    <property type="protein sequence ID" value="CE36691"/>
    <property type="gene ID" value="WBGene00008127"/>
    <property type="gene designation" value="ddo-1"/>
</dbReference>
<dbReference type="eggNOG" id="KOG3923">
    <property type="taxonomic scope" value="Eukaryota"/>
</dbReference>
<dbReference type="GeneTree" id="ENSGT00390000018635"/>
<dbReference type="HOGENOM" id="CLU_034311_0_2_1"/>
<dbReference type="InParanoid" id="O45307"/>
<dbReference type="OMA" id="AVRGQTM"/>
<dbReference type="OrthoDB" id="2015447at2759"/>
<dbReference type="PhylomeDB" id="O45307"/>
<dbReference type="BRENDA" id="1.4.3.1">
    <property type="organism ID" value="1045"/>
</dbReference>
<dbReference type="Reactome" id="R-CEL-389661">
    <property type="pathway name" value="Glyoxylate metabolism and glycine degradation"/>
</dbReference>
<dbReference type="Reactome" id="R-CEL-9033241">
    <property type="pathway name" value="Peroxisomal protein import"/>
</dbReference>
<dbReference type="SABIO-RK" id="O45307"/>
<dbReference type="PRO" id="PR:O45307"/>
<dbReference type="Proteomes" id="UP000001940">
    <property type="component" value="Chromosome V"/>
</dbReference>
<dbReference type="Bgee" id="WBGene00008127">
    <property type="expression patterns" value="Expressed in larva and 1 other cell type or tissue"/>
</dbReference>
<dbReference type="ExpressionAtlas" id="O45307">
    <property type="expression patterns" value="baseline and differential"/>
</dbReference>
<dbReference type="GO" id="GO:0005737">
    <property type="term" value="C:cytoplasm"/>
    <property type="evidence" value="ECO:0000318"/>
    <property type="project" value="GO_Central"/>
</dbReference>
<dbReference type="GO" id="GO:0005782">
    <property type="term" value="C:peroxisomal matrix"/>
    <property type="evidence" value="ECO:0000250"/>
    <property type="project" value="UniProtKB"/>
</dbReference>
<dbReference type="GO" id="GO:0003884">
    <property type="term" value="F:D-amino-acid oxidase activity"/>
    <property type="evidence" value="ECO:0000318"/>
    <property type="project" value="GO_Central"/>
</dbReference>
<dbReference type="GO" id="GO:0008445">
    <property type="term" value="F:D-aspartate oxidase activity"/>
    <property type="evidence" value="ECO:0000314"/>
    <property type="project" value="UniProtKB"/>
</dbReference>
<dbReference type="GO" id="GO:0047821">
    <property type="term" value="F:D-glutamate oxidase activity"/>
    <property type="evidence" value="ECO:0000314"/>
    <property type="project" value="WormBase"/>
</dbReference>
<dbReference type="GO" id="GO:0071949">
    <property type="term" value="F:FAD binding"/>
    <property type="evidence" value="ECO:0000314"/>
    <property type="project" value="UniProtKB"/>
</dbReference>
<dbReference type="GO" id="GO:0019478">
    <property type="term" value="P:D-amino acid catabolic process"/>
    <property type="evidence" value="ECO:0000250"/>
    <property type="project" value="UniProtKB"/>
</dbReference>
<dbReference type="Gene3D" id="3.30.9.10">
    <property type="entry name" value="D-Amino Acid Oxidase, subunit A, domain 2"/>
    <property type="match status" value="1"/>
</dbReference>
<dbReference type="Gene3D" id="3.40.50.720">
    <property type="entry name" value="NAD(P)-binding Rossmann-like Domain"/>
    <property type="match status" value="1"/>
</dbReference>
<dbReference type="InterPro" id="IPR006181">
    <property type="entry name" value="D-amino_acid_oxidase_CS"/>
</dbReference>
<dbReference type="InterPro" id="IPR023209">
    <property type="entry name" value="DAO"/>
</dbReference>
<dbReference type="InterPro" id="IPR006076">
    <property type="entry name" value="FAD-dep_OxRdtase"/>
</dbReference>
<dbReference type="PANTHER" id="PTHR11530">
    <property type="entry name" value="D-AMINO ACID OXIDASE"/>
    <property type="match status" value="1"/>
</dbReference>
<dbReference type="PANTHER" id="PTHR11530:SF28">
    <property type="entry name" value="D-ASPARTATE OXIDASE 1"/>
    <property type="match status" value="1"/>
</dbReference>
<dbReference type="Pfam" id="PF01266">
    <property type="entry name" value="DAO"/>
    <property type="match status" value="1"/>
</dbReference>
<dbReference type="PIRSF" id="PIRSF000189">
    <property type="entry name" value="D-aa_oxidase"/>
    <property type="match status" value="1"/>
</dbReference>
<dbReference type="SUPFAM" id="SSF54373">
    <property type="entry name" value="FAD-linked reductases, C-terminal domain"/>
    <property type="match status" value="1"/>
</dbReference>
<dbReference type="SUPFAM" id="SSF51971">
    <property type="entry name" value="Nucleotide-binding domain"/>
    <property type="match status" value="1"/>
</dbReference>
<dbReference type="PROSITE" id="PS00677">
    <property type="entry name" value="DAO"/>
    <property type="match status" value="1"/>
</dbReference>
<evidence type="ECO:0000250" key="1">
    <source>
        <dbReference type="UniProtKB" id="Q922Z0"/>
    </source>
</evidence>
<evidence type="ECO:0000250" key="2">
    <source>
        <dbReference type="UniProtKB" id="Q99489"/>
    </source>
</evidence>
<evidence type="ECO:0000255" key="3"/>
<evidence type="ECO:0000269" key="4">
    <source>
    </source>
</evidence>
<evidence type="ECO:0000269" key="5">
    <source>
    </source>
</evidence>
<evidence type="ECO:0000269" key="6">
    <source>
    </source>
</evidence>
<evidence type="ECO:0000269" key="7">
    <source>
    </source>
</evidence>
<evidence type="ECO:0000269" key="8">
    <source>
    </source>
</evidence>
<evidence type="ECO:0000305" key="9"/>
<evidence type="ECO:0000312" key="10">
    <source>
        <dbReference type="EMBL" id="BAF34314.1"/>
    </source>
</evidence>
<evidence type="ECO:0000312" key="11">
    <source>
        <dbReference type="EMBL" id="CAB03970.2"/>
    </source>
</evidence>
<sequence>MTPKIAIIGEGVIGCSTALQVAQAVPDARVTVLSDRPFEQTCSFGPAGLFRIDDIANREFGKSTFDWFAHLHRTEKGDKTGVKLLSGHIQSDSKERLEQQQKAYGDIVYNFRFLEKREILDLFPNPSEHCIHYTAFASEGNKYVPYLKFQCQARGVEFLHRKVRDLEELANEGYDVIVNCAGLSGGTLAGDDDSVYPIRGVVLDVEAHWHKHFNYKDFITFTIPKENSVVIGSVKQENRWDLEITDVDRKDILERYVALHPAMREPKILGEWSGLRPARKTIRIEKVEKKSEKSGKKYTVVHHYGHGGNGFTLGWGTAVEATKLVKSALNSSKL</sequence>
<name>OXDD1_CAEEL</name>
<keyword id="KW-0274">FAD</keyword>
<keyword id="KW-0285">Flavoprotein</keyword>
<keyword id="KW-0560">Oxidoreductase</keyword>
<keyword id="KW-0576">Peroxisome</keyword>
<keyword id="KW-1185">Reference proteome</keyword>